<organism>
    <name type="scientific">Escherichia coli (strain K12)</name>
    <dbReference type="NCBI Taxonomy" id="83333"/>
    <lineage>
        <taxon>Bacteria</taxon>
        <taxon>Pseudomonadati</taxon>
        <taxon>Pseudomonadota</taxon>
        <taxon>Gammaproteobacteria</taxon>
        <taxon>Enterobacterales</taxon>
        <taxon>Enterobacteriaceae</taxon>
        <taxon>Escherichia</taxon>
    </lineage>
</organism>
<evidence type="ECO:0000255" key="1"/>
<evidence type="ECO:0000269" key="2">
    <source>
    </source>
</evidence>
<evidence type="ECO:0000269" key="3">
    <source>
    </source>
</evidence>
<evidence type="ECO:0000269" key="4">
    <source>
    </source>
</evidence>
<evidence type="ECO:0000269" key="5">
    <source ref="7"/>
</evidence>
<evidence type="ECO:0000305" key="6"/>
<evidence type="ECO:0007829" key="7">
    <source>
        <dbReference type="PDB" id="2AA4"/>
    </source>
</evidence>
<dbReference type="EC" id="2.7.1.60" evidence="2 3"/>
<dbReference type="EMBL" id="U18997">
    <property type="protein sequence ID" value="AAA58024.1"/>
    <property type="status" value="ALT_INIT"/>
    <property type="molecule type" value="Genomic_DNA"/>
</dbReference>
<dbReference type="EMBL" id="U00096">
    <property type="protein sequence ID" value="AAC76254.2"/>
    <property type="molecule type" value="Genomic_DNA"/>
</dbReference>
<dbReference type="EMBL" id="AP009048">
    <property type="protein sequence ID" value="BAE77265.1"/>
    <property type="molecule type" value="Genomic_DNA"/>
</dbReference>
<dbReference type="PIR" id="H65113">
    <property type="entry name" value="H65113"/>
</dbReference>
<dbReference type="RefSeq" id="NP_417689.4">
    <property type="nucleotide sequence ID" value="NC_000913.3"/>
</dbReference>
<dbReference type="RefSeq" id="WP_000209011.1">
    <property type="nucleotide sequence ID" value="NZ_SSZK01000034.1"/>
</dbReference>
<dbReference type="PDB" id="2AA4">
    <property type="method" value="X-ray"/>
    <property type="resolution" value="2.20 A"/>
    <property type="chains" value="A/B=1-289"/>
</dbReference>
<dbReference type="PDBsum" id="2AA4"/>
<dbReference type="SMR" id="P45425"/>
<dbReference type="BioGRID" id="4261227">
    <property type="interactions" value="316"/>
</dbReference>
<dbReference type="DIP" id="DIP-12282N"/>
<dbReference type="FunCoup" id="P45425">
    <property type="interactions" value="339"/>
</dbReference>
<dbReference type="IntAct" id="P45425">
    <property type="interactions" value="1"/>
</dbReference>
<dbReference type="STRING" id="511145.b3222"/>
<dbReference type="jPOST" id="P45425"/>
<dbReference type="PaxDb" id="511145-b3222"/>
<dbReference type="EnsemblBacteria" id="AAC76254">
    <property type="protein sequence ID" value="AAC76254"/>
    <property type="gene ID" value="b3222"/>
</dbReference>
<dbReference type="GeneID" id="947757"/>
<dbReference type="KEGG" id="ecj:JW5538"/>
<dbReference type="KEGG" id="eco:b3222"/>
<dbReference type="KEGG" id="ecoc:C3026_17530"/>
<dbReference type="PATRIC" id="fig|1411691.4.peg.3506"/>
<dbReference type="EchoBASE" id="EB2666"/>
<dbReference type="eggNOG" id="COG1940">
    <property type="taxonomic scope" value="Bacteria"/>
</dbReference>
<dbReference type="HOGENOM" id="CLU_036604_0_4_6"/>
<dbReference type="InParanoid" id="P45425"/>
<dbReference type="OMA" id="PICGCGR"/>
<dbReference type="OrthoDB" id="8772678at2"/>
<dbReference type="PhylomeDB" id="P45425"/>
<dbReference type="BioCyc" id="EcoCyc:NANK-MONOMER"/>
<dbReference type="BioCyc" id="MetaCyc:NANK-MONOMER"/>
<dbReference type="SABIO-RK" id="P45425"/>
<dbReference type="UniPathway" id="UPA00629">
    <property type="reaction ID" value="UER00681"/>
</dbReference>
<dbReference type="EvolutionaryTrace" id="P45425"/>
<dbReference type="PRO" id="PR:P45425"/>
<dbReference type="Proteomes" id="UP000000625">
    <property type="component" value="Chromosome"/>
</dbReference>
<dbReference type="GO" id="GO:0005524">
    <property type="term" value="F:ATP binding"/>
    <property type="evidence" value="ECO:0007669"/>
    <property type="project" value="UniProtKB-UniRule"/>
</dbReference>
<dbReference type="GO" id="GO:0009384">
    <property type="term" value="F:N-acylmannosamine kinase activity"/>
    <property type="evidence" value="ECO:0000314"/>
    <property type="project" value="EcoCyc"/>
</dbReference>
<dbReference type="GO" id="GO:0008270">
    <property type="term" value="F:zinc ion binding"/>
    <property type="evidence" value="ECO:0007669"/>
    <property type="project" value="UniProtKB-UniRule"/>
</dbReference>
<dbReference type="GO" id="GO:0006974">
    <property type="term" value="P:DNA damage response"/>
    <property type="evidence" value="ECO:0000270"/>
    <property type="project" value="EcoliWiki"/>
</dbReference>
<dbReference type="GO" id="GO:0019262">
    <property type="term" value="P:N-acetylneuraminate catabolic process"/>
    <property type="evidence" value="ECO:0000315"/>
    <property type="project" value="EcoCyc"/>
</dbReference>
<dbReference type="CDD" id="cd24069">
    <property type="entry name" value="ASKHA_NBD_ROK_EcNanK-like"/>
    <property type="match status" value="1"/>
</dbReference>
<dbReference type="FunFam" id="3.30.420.40:FF:000062">
    <property type="entry name" value="N-acetylmannosamine kinase"/>
    <property type="match status" value="1"/>
</dbReference>
<dbReference type="FunFam" id="3.30.420.40:FF:000063">
    <property type="entry name" value="N-acetylmannosamine kinase"/>
    <property type="match status" value="1"/>
</dbReference>
<dbReference type="Gene3D" id="3.30.420.40">
    <property type="match status" value="2"/>
</dbReference>
<dbReference type="HAMAP" id="MF_01234">
    <property type="entry name" value="ManNAc_kinase"/>
    <property type="match status" value="1"/>
</dbReference>
<dbReference type="InterPro" id="IPR043129">
    <property type="entry name" value="ATPase_NBD"/>
</dbReference>
<dbReference type="InterPro" id="IPR023945">
    <property type="entry name" value="ManNAc_kinase_bac"/>
</dbReference>
<dbReference type="InterPro" id="IPR000600">
    <property type="entry name" value="ROK"/>
</dbReference>
<dbReference type="InterPro" id="IPR049874">
    <property type="entry name" value="ROK_cs"/>
</dbReference>
<dbReference type="NCBIfam" id="NF047821">
    <property type="entry name" value="NactlManKinNanK"/>
    <property type="match status" value="1"/>
</dbReference>
<dbReference type="NCBIfam" id="NF003461">
    <property type="entry name" value="PRK05082.1"/>
    <property type="match status" value="1"/>
</dbReference>
<dbReference type="PANTHER" id="PTHR18964:SF169">
    <property type="entry name" value="N-ACETYLMANNOSAMINE KINASE"/>
    <property type="match status" value="1"/>
</dbReference>
<dbReference type="PANTHER" id="PTHR18964">
    <property type="entry name" value="ROK (REPRESSOR, ORF, KINASE) FAMILY"/>
    <property type="match status" value="1"/>
</dbReference>
<dbReference type="Pfam" id="PF00480">
    <property type="entry name" value="ROK"/>
    <property type="match status" value="1"/>
</dbReference>
<dbReference type="SUPFAM" id="SSF53067">
    <property type="entry name" value="Actin-like ATPase domain"/>
    <property type="match status" value="1"/>
</dbReference>
<dbReference type="PROSITE" id="PS01125">
    <property type="entry name" value="ROK"/>
    <property type="match status" value="1"/>
</dbReference>
<feature type="chain" id="PRO_0000095695" description="N-acetylmannosamine kinase">
    <location>
        <begin position="1"/>
        <end position="291"/>
    </location>
</feature>
<feature type="binding site" evidence="1">
    <location>
        <begin position="5"/>
        <end position="12"/>
    </location>
    <ligand>
        <name>ATP</name>
        <dbReference type="ChEBI" id="CHEBI:30616"/>
    </ligand>
</feature>
<feature type="binding site" evidence="1">
    <location>
        <begin position="132"/>
        <end position="139"/>
    </location>
    <ligand>
        <name>ATP</name>
        <dbReference type="ChEBI" id="CHEBI:30616"/>
    </ligand>
</feature>
<feature type="binding site">
    <location>
        <position position="156"/>
    </location>
    <ligand>
        <name>Zn(2+)</name>
        <dbReference type="ChEBI" id="CHEBI:29105"/>
    </ligand>
</feature>
<feature type="binding site">
    <location>
        <position position="166"/>
    </location>
    <ligand>
        <name>Zn(2+)</name>
        <dbReference type="ChEBI" id="CHEBI:29105"/>
    </ligand>
</feature>
<feature type="binding site">
    <location>
        <position position="168"/>
    </location>
    <ligand>
        <name>Zn(2+)</name>
        <dbReference type="ChEBI" id="CHEBI:29105"/>
    </ligand>
</feature>
<feature type="binding site">
    <location>
        <position position="173"/>
    </location>
    <ligand>
        <name>Zn(2+)</name>
        <dbReference type="ChEBI" id="CHEBI:29105"/>
    </ligand>
</feature>
<feature type="mutagenesis site" description="12-fold increase in catalytic efficiency for glucose phosphorylation. 2-fold decrease in catalytic efficiency for N-acetylmannosamine phosphorylation." evidence="3">
    <original>L</original>
    <variation>P</variation>
    <location>
        <position position="84"/>
    </location>
</feature>
<feature type="mutagenesis site" description="6-fold increase in catalytic efficiency for glucose phosphorylation. No change in catalytic efficiency for N-acetylmannosamine phosphorylation." evidence="3">
    <original>V</original>
    <variation>M</variation>
    <location>
        <position position="138"/>
    </location>
</feature>
<feature type="strand" evidence="7">
    <location>
        <begin position="3"/>
        <end position="8"/>
    </location>
</feature>
<feature type="strand" evidence="7">
    <location>
        <begin position="10"/>
        <end position="18"/>
    </location>
</feature>
<feature type="strand" evidence="7">
    <location>
        <begin position="24"/>
        <end position="31"/>
    </location>
</feature>
<feature type="helix" evidence="7">
    <location>
        <begin position="38"/>
        <end position="49"/>
    </location>
</feature>
<feature type="turn" evidence="7">
    <location>
        <begin position="50"/>
        <end position="52"/>
    </location>
</feature>
<feature type="helix" evidence="7">
    <location>
        <begin position="53"/>
        <end position="55"/>
    </location>
</feature>
<feature type="strand" evidence="7">
    <location>
        <begin position="57"/>
        <end position="68"/>
    </location>
</feature>
<feature type="strand" evidence="7">
    <location>
        <begin position="71"/>
        <end position="73"/>
    </location>
</feature>
<feature type="helix" evidence="7">
    <location>
        <begin position="77"/>
        <end position="83"/>
    </location>
</feature>
<feature type="helix" evidence="7">
    <location>
        <begin position="88"/>
        <end position="96"/>
    </location>
</feature>
<feature type="strand" evidence="7">
    <location>
        <begin position="100"/>
        <end position="104"/>
    </location>
</feature>
<feature type="helix" evidence="7">
    <location>
        <begin position="105"/>
        <end position="115"/>
    </location>
</feature>
<feature type="strand" evidence="7">
    <location>
        <begin position="124"/>
        <end position="139"/>
    </location>
</feature>
<feature type="strand" evidence="7">
    <location>
        <begin position="142"/>
        <end position="144"/>
    </location>
</feature>
<feature type="helix" evidence="7">
    <location>
        <begin position="154"/>
        <end position="156"/>
    </location>
</feature>
<feature type="strand" evidence="7">
    <location>
        <begin position="157"/>
        <end position="159"/>
    </location>
</feature>
<feature type="strand" evidence="7">
    <location>
        <begin position="171"/>
        <end position="173"/>
    </location>
</feature>
<feature type="helix" evidence="7">
    <location>
        <begin position="174"/>
        <end position="178"/>
    </location>
</feature>
<feature type="helix" evidence="7">
    <location>
        <begin position="180"/>
        <end position="185"/>
    </location>
</feature>
<feature type="helix" evidence="7">
    <location>
        <begin position="189"/>
        <end position="191"/>
    </location>
</feature>
<feature type="helix" evidence="7">
    <location>
        <begin position="196"/>
        <end position="204"/>
    </location>
</feature>
<feature type="helix" evidence="7">
    <location>
        <begin position="208"/>
        <end position="232"/>
    </location>
</feature>
<feature type="strand" evidence="7">
    <location>
        <begin position="235"/>
        <end position="240"/>
    </location>
</feature>
<feature type="helix" evidence="7">
    <location>
        <begin position="241"/>
        <end position="244"/>
    </location>
</feature>
<feature type="helix" evidence="7">
    <location>
        <begin position="249"/>
        <end position="257"/>
    </location>
</feature>
<feature type="helix" evidence="7">
    <location>
        <begin position="262"/>
        <end position="264"/>
    </location>
</feature>
<feature type="strand" evidence="7">
    <location>
        <begin position="267"/>
        <end position="270"/>
    </location>
</feature>
<feature type="helix" evidence="7">
    <location>
        <begin position="277"/>
        <end position="287"/>
    </location>
</feature>
<sequence>MTTLAIDIGGTKLAAALIGADGQIRDRRELPTPASQTPEALRDALSALVSPLQAHAQRVAIASTGIIRDGSLLALNPHNLGGLLHFPLVKTLEQLTNLPTIAINDAQAAAWAEFQALDGDITDMVFITVSTGVGGGVVSGCKLLTGPGGLAGHIGHTLADPHGPVCGCGRTGCVEAIASGRGIAAAAQGELAGADAKTIFTRAGQGDEQAQQLIHRSARTLARLIADIKATTDCQCVVVGGSVGLAEGYLALVETYLAQEPAAFHVDLLAAHYRHDAGLLGAALLAQGEKL</sequence>
<comment type="function">
    <text evidence="2 3">Catalyzes the phosphorylation of N-acetylmannosamine (ManNAc) to ManNAc-6-P. Also has low level glucokinase activity in vitro.</text>
</comment>
<comment type="catalytic activity">
    <reaction evidence="2 3">
        <text>aldehydo-N-acetyl-D-mannosamine + ATP = aldehydo-N-acetyl-D-mannosamine 6-phosphate + ADP + H(+)</text>
        <dbReference type="Rhea" id="RHEA:25253"/>
        <dbReference type="ChEBI" id="CHEBI:15378"/>
        <dbReference type="ChEBI" id="CHEBI:17122"/>
        <dbReference type="ChEBI" id="CHEBI:30616"/>
        <dbReference type="ChEBI" id="CHEBI:58557"/>
        <dbReference type="ChEBI" id="CHEBI:456216"/>
        <dbReference type="EC" id="2.7.1.60"/>
    </reaction>
    <physiologicalReaction direction="left-to-right" evidence="2">
        <dbReference type="Rhea" id="RHEA:25254"/>
    </physiologicalReaction>
</comment>
<comment type="biophysicochemical properties">
    <kinetics>
        <KM evidence="2 3">0.36 mM for N-acyl-D-mannosamine (at 25 degrees Celsius and pH 7.6)</KM>
        <KM evidence="2 3">0.26 mM for ATP (at 25 degrees Celsius and pH 7.6)</KM>
        <KM evidence="2 3">20 mM for D-glucose (at 25 degrees Celsius and pH 7.6)</KM>
        <KM evidence="2 3">84 mM for D-mannose (at 25 degrees Celsius and pH 7.6)</KM>
        <text>Catalytic efficiency with N-acyl-D-mannosamine as substrate is 136-fold higher than that with D-glucose.</text>
    </kinetics>
</comment>
<comment type="pathway">
    <text>Amino-sugar metabolism; N-acetylneuraminate degradation; D-fructose 6-phosphate from N-acetylneuraminate: step 2/5.</text>
</comment>
<comment type="subunit">
    <text evidence="5">Homodimer.</text>
</comment>
<comment type="induction">
    <text evidence="4">Negatively regulated by the transcriptional repressor NanR. Induced by N-acetylneuraminate, via inactivation of NanR.</text>
</comment>
<comment type="similarity">
    <text evidence="6">Belongs to the ROK (NagC/XylR) family. NanK subfamily.</text>
</comment>
<comment type="sequence caution" evidence="6">
    <conflict type="erroneous initiation">
        <sequence resource="EMBL-CDS" id="AAA58024"/>
    </conflict>
    <text>Extended N-terminus.</text>
</comment>
<proteinExistence type="evidence at protein level"/>
<keyword id="KW-0002">3D-structure</keyword>
<keyword id="KW-0067">ATP-binding</keyword>
<keyword id="KW-0119">Carbohydrate metabolism</keyword>
<keyword id="KW-0418">Kinase</keyword>
<keyword id="KW-0479">Metal-binding</keyword>
<keyword id="KW-0547">Nucleotide-binding</keyword>
<keyword id="KW-1185">Reference proteome</keyword>
<keyword id="KW-0808">Transferase</keyword>
<keyword id="KW-0862">Zinc</keyword>
<gene>
    <name type="primary">nanK</name>
    <name type="synonym">yhcI</name>
    <name type="ordered locus">b3222</name>
    <name type="ordered locus">JW5538</name>
</gene>
<accession>P45425</accession>
<accession>Q2M8Z1</accession>
<name>NANK_ECOLI</name>
<reference key="1">
    <citation type="journal article" date="1997" name="Science">
        <title>The complete genome sequence of Escherichia coli K-12.</title>
        <authorList>
            <person name="Blattner F.R."/>
            <person name="Plunkett G. III"/>
            <person name="Bloch C.A."/>
            <person name="Perna N.T."/>
            <person name="Burland V."/>
            <person name="Riley M."/>
            <person name="Collado-Vides J."/>
            <person name="Glasner J.D."/>
            <person name="Rode C.K."/>
            <person name="Mayhew G.F."/>
            <person name="Gregor J."/>
            <person name="Davis N.W."/>
            <person name="Kirkpatrick H.A."/>
            <person name="Goeden M.A."/>
            <person name="Rose D.J."/>
            <person name="Mau B."/>
            <person name="Shao Y."/>
        </authorList>
    </citation>
    <scope>NUCLEOTIDE SEQUENCE [LARGE SCALE GENOMIC DNA]</scope>
    <source>
        <strain>K12 / MG1655 / ATCC 47076</strain>
    </source>
</reference>
<reference key="2">
    <citation type="journal article" date="2006" name="Mol. Syst. Biol.">
        <title>Highly accurate genome sequences of Escherichia coli K-12 strains MG1655 and W3110.</title>
        <authorList>
            <person name="Hayashi K."/>
            <person name="Morooka N."/>
            <person name="Yamamoto Y."/>
            <person name="Fujita K."/>
            <person name="Isono K."/>
            <person name="Choi S."/>
            <person name="Ohtsubo E."/>
            <person name="Baba T."/>
            <person name="Wanner B.L."/>
            <person name="Mori H."/>
            <person name="Horiuchi T."/>
        </authorList>
    </citation>
    <scope>NUCLEOTIDE SEQUENCE [LARGE SCALE GENOMIC DNA]</scope>
    <source>
        <strain>K12 / W3110 / ATCC 27325 / DSM 5911</strain>
    </source>
</reference>
<reference key="3">
    <citation type="journal article" date="1999" name="J. Bacteriol.">
        <title>Convergent pathways for utilization of the amino sugars N-acetylglucosamine, N-acetylmannosamine, and N-acetylneuraminic acid by Escherichia coli.</title>
        <authorList>
            <person name="Plumbridge J."/>
            <person name="Vimr E."/>
        </authorList>
    </citation>
    <scope>PUTATIVE FUNCTION</scope>
</reference>
<reference key="4">
    <citation type="journal article" date="2004" name="Biochemistry">
        <title>Identifying latent enzyme activities: substrate ambiguity within modern bacterial sugar kinases.</title>
        <authorList>
            <person name="Miller B.G."/>
            <person name="Raines R.T."/>
        </authorList>
    </citation>
    <scope>FUNCTION</scope>
    <scope>CATALYTIC ACTIVITY</scope>
    <scope>BIOPHYSICOCHEMICAL PROPERTIES</scope>
    <source>
        <strain>K12 / MC4100 / ATCC 35695 / DSM 6574</strain>
    </source>
</reference>
<reference key="5">
    <citation type="journal article" date="2007" name="Biochemistry">
        <title>Divergent evolution of function in the ROK sugar kinase superfamily: role of enzyme loops in substrate specificity.</title>
        <authorList>
            <person name="Larion M."/>
            <person name="Moore L.B."/>
            <person name="Thompson S.M."/>
            <person name="Miller B.G."/>
        </authorList>
    </citation>
    <scope>FUNCTION</scope>
    <scope>CATALYTIC ACTIVITY</scope>
    <scope>SUBSTRATE SPECIFICITY</scope>
    <scope>BIOPHYSICOCHEMICAL PROPERTIES</scope>
    <scope>MUTAGENESIS OF LEU-84 AND VAL-138</scope>
</reference>
<reference key="6">
    <citation type="journal article" date="2013" name="J. Bacteriol.">
        <title>Control of the Escherichia coli sialoregulon by transcriptional repressor NanR.</title>
        <authorList>
            <person name="Kalivoda K.A."/>
            <person name="Steenbergen S.M."/>
            <person name="Vimr E.R."/>
        </authorList>
    </citation>
    <scope>INDUCTION</scope>
</reference>
<reference key="7">
    <citation type="submission" date="2005-07" db="PDB data bank">
        <title>Crystal structure of Escherichia coli putative N-acetylmannosamine kinase.</title>
        <authorList>
            <consortium name="New York structural genomics research consortium (NYSGRC)"/>
        </authorList>
    </citation>
    <scope>X-RAY CRYSTALLOGRAPHY (2.2 ANGSTROMS) OF 1-289 IN COMPLEX WITH ZINC IONS</scope>
    <scope>SUBUNIT</scope>
</reference>
<protein>
    <recommendedName>
        <fullName>N-acetylmannosamine kinase</fullName>
        <ecNumber evidence="2 3">2.7.1.60</ecNumber>
    </recommendedName>
    <alternativeName>
        <fullName>ManNAc kinase</fullName>
    </alternativeName>
    <alternativeName>
        <fullName>N-acetyl-D-mannosamine kinase</fullName>
    </alternativeName>
</protein>